<feature type="chain" id="PRO_0000252310" description="Translationally-controlled tumor protein homolog">
    <location>
        <begin position="1"/>
        <end position="173"/>
    </location>
</feature>
<feature type="domain" description="TCTP" evidence="2">
    <location>
        <begin position="1"/>
        <end position="173"/>
    </location>
</feature>
<proteinExistence type="inferred from homology"/>
<keyword id="KW-0106">Calcium</keyword>
<keyword id="KW-0963">Cytoplasm</keyword>
<keyword id="KW-1185">Reference proteome</keyword>
<dbReference type="EMBL" id="CR940347">
    <property type="protein sequence ID" value="CAI73774.1"/>
    <property type="molecule type" value="Genomic_DNA"/>
</dbReference>
<dbReference type="RefSeq" id="XP_954451.1">
    <property type="nucleotide sequence ID" value="XM_949358.1"/>
</dbReference>
<dbReference type="SMR" id="Q4UGL5"/>
<dbReference type="FunCoup" id="Q4UGL5">
    <property type="interactions" value="305"/>
</dbReference>
<dbReference type="STRING" id="5874.Q4UGL5"/>
<dbReference type="GeneID" id="3863926"/>
<dbReference type="KEGG" id="tan:TA21460"/>
<dbReference type="VEuPathDB" id="PiroplasmaDB:TA21460"/>
<dbReference type="eggNOG" id="KOG1727">
    <property type="taxonomic scope" value="Eukaryota"/>
</dbReference>
<dbReference type="InParanoid" id="Q4UGL5"/>
<dbReference type="OMA" id="CAMITEG"/>
<dbReference type="OrthoDB" id="10248936at2759"/>
<dbReference type="Proteomes" id="UP000001950">
    <property type="component" value="Chromosome 1 part 1"/>
</dbReference>
<dbReference type="GO" id="GO:0005737">
    <property type="term" value="C:cytoplasm"/>
    <property type="evidence" value="ECO:0007669"/>
    <property type="project" value="UniProtKB-SubCell"/>
</dbReference>
<dbReference type="GO" id="GO:0005509">
    <property type="term" value="F:calcium ion binding"/>
    <property type="evidence" value="ECO:0007669"/>
    <property type="project" value="TreeGrafter"/>
</dbReference>
<dbReference type="Gene3D" id="2.170.150.10">
    <property type="entry name" value="Metal Binding Protein, Guanine Nucleotide Exchange Factor, Chain A"/>
    <property type="match status" value="1"/>
</dbReference>
<dbReference type="InterPro" id="IPR011057">
    <property type="entry name" value="Mss4-like_sf"/>
</dbReference>
<dbReference type="InterPro" id="IPR011323">
    <property type="entry name" value="Mss4/transl-control_tumour"/>
</dbReference>
<dbReference type="InterPro" id="IPR034737">
    <property type="entry name" value="TCTP"/>
</dbReference>
<dbReference type="InterPro" id="IPR018103">
    <property type="entry name" value="Translation_control_tumour_CS"/>
</dbReference>
<dbReference type="InterPro" id="IPR018105">
    <property type="entry name" value="Translational_control_tumour_p"/>
</dbReference>
<dbReference type="PANTHER" id="PTHR11991">
    <property type="entry name" value="TRANSLATIONALLY CONTROLLED TUMOR PROTEIN-RELATED"/>
    <property type="match status" value="1"/>
</dbReference>
<dbReference type="PANTHER" id="PTHR11991:SF0">
    <property type="entry name" value="TRANSLATIONALLY-CONTROLLED TUMOR PROTEIN"/>
    <property type="match status" value="1"/>
</dbReference>
<dbReference type="Pfam" id="PF00838">
    <property type="entry name" value="TCTP"/>
    <property type="match status" value="1"/>
</dbReference>
<dbReference type="PRINTS" id="PR01653">
    <property type="entry name" value="TCTPROTEIN"/>
</dbReference>
<dbReference type="SUPFAM" id="SSF51316">
    <property type="entry name" value="Mss4-like"/>
    <property type="match status" value="1"/>
</dbReference>
<dbReference type="PROSITE" id="PS01003">
    <property type="entry name" value="TCTP_2"/>
    <property type="match status" value="1"/>
</dbReference>
<dbReference type="PROSITE" id="PS51797">
    <property type="entry name" value="TCTP_3"/>
    <property type="match status" value="1"/>
</dbReference>
<comment type="function">
    <text evidence="1">Involved in calcium binding and microtubule stabilization.</text>
</comment>
<comment type="subcellular location">
    <subcellularLocation>
        <location evidence="1">Cytoplasm</location>
    </subcellularLocation>
</comment>
<comment type="similarity">
    <text evidence="2">Belongs to the TCTP family.</text>
</comment>
<accession>Q4UGL5</accession>
<organism>
    <name type="scientific">Theileria annulata</name>
    <dbReference type="NCBI Taxonomy" id="5874"/>
    <lineage>
        <taxon>Eukaryota</taxon>
        <taxon>Sar</taxon>
        <taxon>Alveolata</taxon>
        <taxon>Apicomplexa</taxon>
        <taxon>Aconoidasida</taxon>
        <taxon>Piroplasmida</taxon>
        <taxon>Theileriidae</taxon>
        <taxon>Theileria</taxon>
    </lineage>
</organism>
<reference key="1">
    <citation type="journal article" date="2005" name="Science">
        <title>Genome of the host-cell transforming parasite Theileria annulata compared with T. parva.</title>
        <authorList>
            <person name="Pain A."/>
            <person name="Renauld H."/>
            <person name="Berriman M."/>
            <person name="Murphy L."/>
            <person name="Yeats C.A."/>
            <person name="Weir W."/>
            <person name="Kerhornou A."/>
            <person name="Aslett M."/>
            <person name="Bishop R."/>
            <person name="Bouchier C."/>
            <person name="Cochet M."/>
            <person name="Coulson R.M.R."/>
            <person name="Cronin A."/>
            <person name="de Villiers E.P."/>
            <person name="Fraser A."/>
            <person name="Fosker N."/>
            <person name="Gardner M."/>
            <person name="Goble A."/>
            <person name="Griffiths-Jones S."/>
            <person name="Harris D.E."/>
            <person name="Katzer F."/>
            <person name="Larke N."/>
            <person name="Lord A."/>
            <person name="Maser P."/>
            <person name="McKellar S."/>
            <person name="Mooney P."/>
            <person name="Morton F."/>
            <person name="Nene V."/>
            <person name="O'Neil S."/>
            <person name="Price C."/>
            <person name="Quail M.A."/>
            <person name="Rabbinowitsch E."/>
            <person name="Rawlings N.D."/>
            <person name="Rutter S."/>
            <person name="Saunders D."/>
            <person name="Seeger K."/>
            <person name="Shah T."/>
            <person name="Squares R."/>
            <person name="Squares S."/>
            <person name="Tivey A."/>
            <person name="Walker A.R."/>
            <person name="Woodward J."/>
            <person name="Dobbelaere D.A.E."/>
            <person name="Langsley G."/>
            <person name="Rajandream M.A."/>
            <person name="McKeever D."/>
            <person name="Shiels B."/>
            <person name="Tait A."/>
            <person name="Barrell B.G."/>
            <person name="Hall N."/>
        </authorList>
    </citation>
    <scope>NUCLEOTIDE SEQUENCE [LARGE SCALE GENOMIC DNA]</scope>
    <source>
        <strain>Ankara</strain>
    </source>
</reference>
<evidence type="ECO:0000250" key="1"/>
<evidence type="ECO:0000255" key="2">
    <source>
        <dbReference type="PROSITE-ProRule" id="PRU01133"/>
    </source>
</evidence>
<name>TCTP_THEAN</name>
<protein>
    <recommendedName>
        <fullName>Translationally-controlled tumor protein homolog</fullName>
        <shortName>TCTP</shortName>
    </recommendedName>
</protein>
<sequence length="173" mass="19851">MKVYRDLYSNDEVCSDAYDHLDPFDNPDLSSVAFEVKTSKVAKGEEDYGIGYNDEEGGDQMNVDPNVEVVVDVVDKFALQSLPLTKKDYSSYIKKYIQRLVATLQEKNPERVEPFKTSVSEFVKHVLANFDDFEFYVGESLDYEAGLVYGYYKGEEVSPRLVFLKDGLVEERY</sequence>
<gene>
    <name type="primary">TCTP</name>
    <name type="ORF">TA21460</name>
</gene>